<reference key="1">
    <citation type="journal article" date="2006" name="FEBS Lett.">
        <title>Dammarenediol-II synthase, the first dedicated enzyme for ginsenoside biosynthesis, in Panax ginseng.</title>
        <authorList>
            <person name="Tansakul P."/>
            <person name="Shibuya M."/>
            <person name="Kushiro T."/>
            <person name="Ebizuka Y."/>
        </authorList>
    </citation>
    <scope>NUCLEOTIDE SEQUENCE [MRNA]</scope>
    <source>
        <tissue>Root</tissue>
    </source>
</reference>
<reference key="2">
    <citation type="journal article" date="2006" name="Plant Cell Physiol.">
        <title>Expression and RNA interference-induced silencing of the dammarenediol synthase gene in Panax ginseng.</title>
        <authorList>
            <person name="Han J.Y."/>
            <person name="Kwon Y.S."/>
            <person name="Yang D.C."/>
            <person name="Jung Y.R."/>
            <person name="Choi Y.E."/>
        </authorList>
    </citation>
    <scope>NUCLEOTIDE SEQUENCE [MRNA]</scope>
    <scope>FUNCTION</scope>
    <scope>CATALYTIC ACTIVITY</scope>
    <scope>TISSUE SPECIFICITY</scope>
    <scope>INDUCTION BY METHYL JASMONATE</scope>
</reference>
<reference key="3">
    <citation type="submission" date="2009-11" db="EMBL/GenBank/DDBJ databases">
        <title>Dammarenediol synthase gene in Panax ginseng.</title>
        <authorList>
            <person name="Han J.Y."/>
            <person name="Choi Y.E."/>
        </authorList>
    </citation>
    <scope>NUCLEOTIDE SEQUENCE [MRNA]</scope>
</reference>
<reference key="4">
    <citation type="journal article" date="2013" name="Biomed. Res. Int.">
        <title>Molecular cloning, expression, purification, and functional characterization of dammarenediol synthase from Panax ginseng.</title>
        <authorList>
            <person name="Hu W."/>
            <person name="Liu N."/>
            <person name="Tian Y."/>
            <person name="Zhang L."/>
        </authorList>
    </citation>
    <scope>NUCLEOTIDE SEQUENCE [MRNA]</scope>
    <scope>FUNCTION</scope>
    <scope>CATALYTIC ACTIVITY</scope>
    <source>
        <tissue>Root</tissue>
    </source>
</reference>
<reference key="5">
    <citation type="submission" date="2014-06" db="EMBL/GenBank/DDBJ databases">
        <title>Cloning and expression analysis of HMGR, SS, SE, DS, and bAS genes in Panax ginseng.</title>
        <authorList>
            <person name="Hou S."/>
            <person name="Han M."/>
            <person name="Liu C."/>
            <person name="Yang L."/>
        </authorList>
    </citation>
    <scope>NUCLEOTIDE SEQUENCE [MRNA]</scope>
</reference>
<reference key="6">
    <citation type="submission" date="2014-07" db="EMBL/GenBank/DDBJ databases">
        <title>Application of nested PCR and direct sequencing to discover single nucleotide polymorphisms in cDNA sequence of dammaranediol synthase gene of Panax ginseng.</title>
        <authorList>
            <person name="Wu W.R."/>
            <person name="Zhou H."/>
            <person name="Liu L."/>
            <person name="Huang B.M."/>
        </authorList>
    </citation>
    <scope>NUCLEOTIDE SEQUENCE [MRNA] OF 390-769</scope>
</reference>
<reference key="7">
    <citation type="journal article" date="2013" name="Bull. Environ. Contam. Toxicol.">
        <title>Transcript pattern of cytochrome P450, antioxidant and ginsenoside biosynthetic pathway genes under heavy metal stress in Panax ginseng Meyer.</title>
        <authorList>
            <person name="Balusamy S.R.D."/>
            <person name="Kim Y.-J."/>
            <person name="Rahimi S."/>
            <person name="Senthil K.S."/>
            <person name="Lee O.R."/>
            <person name="Lee S."/>
            <person name="Yang D.-C."/>
        </authorList>
    </citation>
    <scope>INDUCED BY HEAVY METAL STRESS</scope>
</reference>
<reference key="8">
    <citation type="journal article" date="2013" name="J. Biotechnol.">
        <title>Enhancement of ginsenoside biosynthesis in cell cultures of Panax ginseng by N,N'-dicyclohexylcarbodiimide elicitation.</title>
        <authorList>
            <person name="Huang C."/>
            <person name="Qian Z.-G."/>
            <person name="Zhong J.-J."/>
        </authorList>
    </citation>
    <scope>INDUCTION BY DCCD</scope>
</reference>
<reference key="9">
    <citation type="journal article" date="2013" name="J. Ginseng Res.">
        <title>The improvement of ginsenoside accumulation in Panax ginseng as a result of gamma-irradiation.</title>
        <authorList>
            <person name="Kim D.S."/>
            <person name="Song M."/>
            <person name="Kim S.-H."/>
            <person name="Jang D.-S."/>
            <person name="Kim J.-B."/>
            <person name="Ha B.-K."/>
            <person name="Kim S.H."/>
            <person name="Lee K.J."/>
            <person name="Kang S.-Y."/>
            <person name="Jeong I.Y."/>
        </authorList>
    </citation>
    <scope>GENE FAMILY</scope>
</reference>
<reference key="10">
    <citation type="journal article" date="2013" name="Process Biochem.">
        <title>Elicitation of ginsenoside biosynthesis in cell cultures of Panax ginseng by vanadate.</title>
        <authorList>
            <person name="Huang C."/>
            <person name="Zhong J.-J."/>
        </authorList>
    </citation>
    <scope>INDUCTION BY VANADATE</scope>
</reference>
<reference key="11">
    <citation type="journal article" date="2015" name="Biotechnol. Appl. Biochem.">
        <title>Enhancement of ginsenoside biosynthesis and secretion by Tween 80 in Panax ginseng hairy roots.</title>
        <authorList>
            <person name="Liang Y."/>
            <person name="Wu J."/>
            <person name="Li Y."/>
            <person name="Li J."/>
            <person name="Ouyang Y."/>
            <person name="He Z."/>
            <person name="Zhao S."/>
        </authorList>
    </citation>
    <scope>INDUCTION BY TWEEN 80</scope>
</reference>
<reference key="12">
    <citation type="journal article" date="2015" name="Plant Cell Rep.">
        <title>Production of the dammarene sapogenin (protopanaxadiol) in transgenic tobacco plants and cultured cells by heterologous expression of PgDDS and CYP716A47.</title>
        <authorList>
            <person name="Chun J.-H."/>
            <person name="Adhikari P.B."/>
            <person name="Park S.-B."/>
            <person name="Han J.-Y."/>
            <person name="Choi Y.-E."/>
        </authorList>
    </citation>
    <scope>FUNCTION</scope>
    <scope>BIOTECHNOLOGY</scope>
</reference>
<reference key="13">
    <citation type="journal article" date="2016" name="J. Biotechnol.">
        <title>Fungal elicitors enhance ginsenosides biosynthesis, expression of functional genes as well as signal molecules accumulation in adventitious roots of Panax ginseng C. A. Mey.</title>
        <authorList>
            <person name="Li J."/>
            <person name="Liu S."/>
            <person name="Wang J."/>
            <person name="Li J."/>
            <person name="Liu D."/>
            <person name="Li J."/>
            <person name="Gao W."/>
        </authorList>
    </citation>
    <scope>FUNCTION</scope>
    <scope>INDUCTION BY ASPERGILLUS NIGER</scope>
</reference>
<reference key="14">
    <citation type="journal article" date="2018" name="Biotechnol. Appl. Biochem.">
        <title>Advances in ginsenoside biosynthesis and metabolic regulation.</title>
        <authorList>
            <person name="Lu J."/>
            <person name="Li J."/>
            <person name="Wang S."/>
            <person name="Yao L."/>
            <person name="Liang W."/>
            <person name="Wang J."/>
            <person name="Gao W."/>
        </authorList>
    </citation>
    <scope>REVIEW</scope>
</reference>
<reference key="15">
    <citation type="journal article" date="2018" name="Molecules">
        <title>Progress on the studies of the key enzymes of ginsenoside biosynthesis.</title>
        <authorList>
            <person name="Yang J.-L."/>
            <person name="Hu Z.-F."/>
            <person name="Zhang T.-T."/>
            <person name="Gu A.-D."/>
            <person name="Gong T."/>
            <person name="Zhu P."/>
        </authorList>
    </citation>
    <scope>REVIEW</scope>
    <scope>NOMENCLATURE</scope>
</reference>
<reference key="16">
    <citation type="journal article" date="2018" name="Molecules">
        <title>The effects of environmental factors on ginsenoside biosynthetic enzyme gene expression and saponin abundance.</title>
        <authorList>
            <person name="Zhang T."/>
            <person name="Han M."/>
            <person name="Yang L."/>
            <person name="Han Z."/>
            <person name="Cheng L."/>
            <person name="Sun Z."/>
            <person name="Yang L."/>
        </authorList>
    </citation>
    <scope>DEVELOPMENTAL STAGE</scope>
    <scope>TISSUE SPECIFICITY</scope>
    <scope>INDUCTION BY ABIOTIC FACTORS</scope>
</reference>
<evidence type="ECO:0000250" key="1">
    <source>
        <dbReference type="UniProtKB" id="P48449"/>
    </source>
</evidence>
<evidence type="ECO:0000255" key="2"/>
<evidence type="ECO:0000269" key="3">
    <source>
    </source>
</evidence>
<evidence type="ECO:0000269" key="4">
    <source>
    </source>
</evidence>
<evidence type="ECO:0000269" key="5">
    <source>
    </source>
</evidence>
<evidence type="ECO:0000269" key="6">
    <source>
    </source>
</evidence>
<evidence type="ECO:0000269" key="7">
    <source>
    </source>
</evidence>
<evidence type="ECO:0000269" key="8">
    <source>
    </source>
</evidence>
<evidence type="ECO:0000269" key="9">
    <source>
    </source>
</evidence>
<evidence type="ECO:0000269" key="10">
    <source>
    </source>
</evidence>
<evidence type="ECO:0000269" key="11">
    <source ref="10"/>
</evidence>
<evidence type="ECO:0000303" key="12">
    <source>
    </source>
</evidence>
<evidence type="ECO:0000303" key="13">
    <source>
    </source>
</evidence>
<evidence type="ECO:0000303" key="14">
    <source>
    </source>
</evidence>
<evidence type="ECO:0000303" key="15">
    <source>
    </source>
</evidence>
<evidence type="ECO:0000303" key="16">
    <source>
    </source>
</evidence>
<evidence type="ECO:0000303" key="17">
    <source>
    </source>
</evidence>
<evidence type="ECO:0000303" key="18">
    <source ref="5"/>
</evidence>
<evidence type="ECO:0000305" key="19"/>
<feature type="chain" id="PRO_0000412837" description="Dammarenediol II synthase">
    <location>
        <begin position="1"/>
        <end position="769"/>
    </location>
</feature>
<feature type="transmembrane region" description="Helical" evidence="2">
    <location>
        <begin position="612"/>
        <end position="632"/>
    </location>
</feature>
<feature type="repeat" description="PFTB 1" evidence="2">
    <location>
        <begin position="457"/>
        <end position="501"/>
    </location>
</feature>
<feature type="repeat" description="PFTB 2" evidence="2">
    <location>
        <begin position="518"/>
        <end position="563"/>
    </location>
</feature>
<feature type="repeat" description="PFTB 3" evidence="2">
    <location>
        <begin position="595"/>
        <end position="635"/>
    </location>
</feature>
<feature type="repeat" description="PFTB 4" evidence="2">
    <location>
        <begin position="644"/>
        <end position="685"/>
    </location>
</feature>
<feature type="repeat" description="PFTB 5" evidence="2">
    <location>
        <begin position="706"/>
        <end position="747"/>
    </location>
</feature>
<feature type="active site" description="Proton donor" evidence="1">
    <location>
        <position position="488"/>
    </location>
</feature>
<feature type="site" description="Transition state stabilizer" evidence="1">
    <location>
        <position position="421"/>
    </location>
</feature>
<feature type="site" description="Transition state stabilizer" evidence="1">
    <location>
        <position position="477"/>
    </location>
</feature>
<feature type="site" description="Transition state stabilizer" evidence="1">
    <location>
        <position position="616"/>
    </location>
</feature>
<feature type="sequence conflict" description="In Ref. 3; ACZ71036 and 2; BAD15332." evidence="19" ref="3 2">
    <original>QKG</original>
    <variation>LKV</variation>
    <location>
        <begin position="4"/>
        <end position="6"/>
    </location>
</feature>
<feature type="sequence conflict" description="In Ref. 4; AEO27862 and 5; AJV26447." evidence="19" ref="4 5">
    <original>G</original>
    <variation>V</variation>
    <location>
        <position position="6"/>
    </location>
</feature>
<feature type="sequence conflict" description="In Ref. 2; BAD15332." evidence="19" ref="2">
    <original>N</original>
    <variation>I</variation>
    <location>
        <position position="310"/>
    </location>
</feature>
<feature type="sequence conflict" description="In Ref. 2; BAD15332." evidence="19" ref="2">
    <original>A</original>
    <variation>V</variation>
    <location>
        <position position="446"/>
    </location>
</feature>
<gene>
    <name evidence="13 16" type="primary">DDS</name>
    <name evidence="12 17 18" type="synonym">DS</name>
    <name evidence="16" type="synonym">PNA</name>
</gene>
<proteinExistence type="evidence at protein level"/>
<sequence length="769" mass="88343">MWKQKGAQGNDPYLYSTNNFVGRQYWEFQPDAGTPEEREEVEKARKDYVNNKKLHGIHPCSDMLMRRQLIKESGIDLLSIPPLRLDENEQVNYDAVTTAVKKALRLNRAIQAHDGHWPAENAGSLLYTPPLIIALYISGTIDTILTKQHKKELIRFVYNHQNEDGGWGSYIEGHSTMIGSVLSYVMLRLLGEGLAESDDGNGAVERGRKWILDHGGAAGIPSWGKTYLAVLGVYEWEGCNPLPPEFWLFPSSFPFHPAKMWIYCRCTYMPMSYLYGKRYHGPITDLVLSLRQEIYNIPYEQIKWNQQRHNCCKEDLYYPHTLVQDLVWDGLHYFSEPFLKRWPFNKLRKRGLKRVVELMRYGATETRFITTGNGEKALQIMSWWAEDPNGDEFKHHLARIPDFLWIAEDGMTVQSFGSQLWDCILATQAIIATNMVEEYGDSLKKAHFFIKESQIKENPRGDFLKMCRQFTKGAWTFSDQDHGCVVSDCTAEALKCLLLLSQMPQDIVGEKPEVERLYEAVNVLLYLQSRVSGGFAVWEPPVPKPYLEMLNPSEIFADIVVEREHIECTASVIKGLMAFKCLHPGHRQKEIEDSVAKAIRYLERNQMPDGSWYGFWGICFLYGTFFTLSGFASAGRTYDNSEAVRKGVKFFLSTQNEEGGWGESLESCPSEKFTPLKGNRTNLVQTSWAMLGLMFGGQAERDPTPLHRAAKLLINAQMDNGDFPQQEITGVYCKNSMLHYAEYRNIFPLWALGEYRKRVWLPKHQQLKI</sequence>
<dbReference type="EC" id="4.2.1.125" evidence="3 6"/>
<dbReference type="EMBL" id="AB265170">
    <property type="protein sequence ID" value="BAF33291.1"/>
    <property type="molecule type" value="mRNA"/>
</dbReference>
<dbReference type="EMBL" id="AB122080">
    <property type="protein sequence ID" value="BAD15332.1"/>
    <property type="molecule type" value="mRNA"/>
</dbReference>
<dbReference type="EMBL" id="GU183405">
    <property type="protein sequence ID" value="ACZ71036.1"/>
    <property type="molecule type" value="mRNA"/>
</dbReference>
<dbReference type="EMBL" id="JN596111">
    <property type="protein sequence ID" value="AEO27862.1"/>
    <property type="molecule type" value="mRNA"/>
</dbReference>
<dbReference type="EMBL" id="KJ939266">
    <property type="protein sequence ID" value="AJV26447.1"/>
    <property type="molecule type" value="mRNA"/>
</dbReference>
<dbReference type="EMBL" id="KM232664">
    <property type="protein sequence ID" value="AJC01927.1"/>
    <property type="molecule type" value="mRNA"/>
</dbReference>
<dbReference type="EMBL" id="KM232668">
    <property type="protein sequence ID" value="AJC01931.1"/>
    <property type="molecule type" value="mRNA"/>
</dbReference>
<dbReference type="SMR" id="Q08IT1"/>
<dbReference type="KEGG" id="ag:BAF33291"/>
<dbReference type="BioCyc" id="MetaCyc:MONOMER-13444"/>
<dbReference type="BRENDA" id="4.2.1.125">
    <property type="organism ID" value="7895"/>
</dbReference>
<dbReference type="UniPathway" id="UPA00213"/>
<dbReference type="GO" id="GO:0005789">
    <property type="term" value="C:endoplasmic reticulum membrane"/>
    <property type="evidence" value="ECO:0007669"/>
    <property type="project" value="UniProtKB-SubCell"/>
</dbReference>
<dbReference type="GO" id="GO:0005811">
    <property type="term" value="C:lipid droplet"/>
    <property type="evidence" value="ECO:0007669"/>
    <property type="project" value="InterPro"/>
</dbReference>
<dbReference type="GO" id="GO:0042300">
    <property type="term" value="F:beta-amyrin synthase activity"/>
    <property type="evidence" value="ECO:0007669"/>
    <property type="project" value="TreeGrafter"/>
</dbReference>
<dbReference type="GO" id="GO:0016829">
    <property type="term" value="F:lyase activity"/>
    <property type="evidence" value="ECO:0007669"/>
    <property type="project" value="UniProtKB-KW"/>
</dbReference>
<dbReference type="GO" id="GO:0010038">
    <property type="term" value="P:response to metal ion"/>
    <property type="evidence" value="ECO:0000270"/>
    <property type="project" value="UniProtKB"/>
</dbReference>
<dbReference type="GO" id="GO:0002238">
    <property type="term" value="P:response to molecule of fungal origin"/>
    <property type="evidence" value="ECO:0000270"/>
    <property type="project" value="UniProtKB"/>
</dbReference>
<dbReference type="GO" id="GO:1902438">
    <property type="term" value="P:response to vanadate(3-)"/>
    <property type="evidence" value="ECO:0000270"/>
    <property type="project" value="UniProtKB"/>
</dbReference>
<dbReference type="GO" id="GO:0016135">
    <property type="term" value="P:saponin biosynthetic process"/>
    <property type="evidence" value="ECO:0000314"/>
    <property type="project" value="UniProtKB"/>
</dbReference>
<dbReference type="GO" id="GO:0016104">
    <property type="term" value="P:triterpenoid biosynthetic process"/>
    <property type="evidence" value="ECO:0000314"/>
    <property type="project" value="UniProtKB"/>
</dbReference>
<dbReference type="CDD" id="cd02892">
    <property type="entry name" value="SQCY_1"/>
    <property type="match status" value="1"/>
</dbReference>
<dbReference type="FunFam" id="1.50.10.20:FF:000011">
    <property type="entry name" value="Terpene cyclase/mutase family member"/>
    <property type="match status" value="1"/>
</dbReference>
<dbReference type="Gene3D" id="1.50.10.20">
    <property type="match status" value="2"/>
</dbReference>
<dbReference type="InterPro" id="IPR032696">
    <property type="entry name" value="SQ_cyclase_C"/>
</dbReference>
<dbReference type="InterPro" id="IPR032697">
    <property type="entry name" value="SQ_cyclase_N"/>
</dbReference>
<dbReference type="InterPro" id="IPR018333">
    <property type="entry name" value="Squalene_cyclase"/>
</dbReference>
<dbReference type="InterPro" id="IPR002365">
    <property type="entry name" value="Terpene_synthase_CS"/>
</dbReference>
<dbReference type="InterPro" id="IPR008930">
    <property type="entry name" value="Terpenoid_cyclase/PrenylTrfase"/>
</dbReference>
<dbReference type="NCBIfam" id="TIGR01787">
    <property type="entry name" value="squalene_cyclas"/>
    <property type="match status" value="1"/>
</dbReference>
<dbReference type="PANTHER" id="PTHR11764">
    <property type="entry name" value="TERPENE CYCLASE/MUTASE FAMILY MEMBER"/>
    <property type="match status" value="1"/>
</dbReference>
<dbReference type="PANTHER" id="PTHR11764:SF71">
    <property type="entry name" value="TERPENE CYCLASE_MUTASE FAMILY MEMBER"/>
    <property type="match status" value="1"/>
</dbReference>
<dbReference type="Pfam" id="PF13243">
    <property type="entry name" value="SQHop_cyclase_C"/>
    <property type="match status" value="1"/>
</dbReference>
<dbReference type="Pfam" id="PF13249">
    <property type="entry name" value="SQHop_cyclase_N"/>
    <property type="match status" value="1"/>
</dbReference>
<dbReference type="SFLD" id="SFLDG01016">
    <property type="entry name" value="Prenyltransferase_Like_2"/>
    <property type="match status" value="1"/>
</dbReference>
<dbReference type="SUPFAM" id="SSF48239">
    <property type="entry name" value="Terpenoid cyclases/Protein prenyltransferases"/>
    <property type="match status" value="2"/>
</dbReference>
<dbReference type="PROSITE" id="PS01074">
    <property type="entry name" value="TERPENE_SYNTHASES"/>
    <property type="match status" value="1"/>
</dbReference>
<protein>
    <recommendedName>
        <fullName evidence="12 16 18">Dammarenediol II synthase</fullName>
        <shortName evidence="12 16 18">Dammarenediol synthase</shortName>
        <shortName evidence="14 16">PgDDS</shortName>
        <ecNumber evidence="3 6">4.2.1.125</ecNumber>
    </recommendedName>
</protein>
<name>DADIS_PANGI</name>
<organism>
    <name type="scientific">Panax ginseng</name>
    <name type="common">Korean ginseng</name>
    <dbReference type="NCBI Taxonomy" id="4054"/>
    <lineage>
        <taxon>Eukaryota</taxon>
        <taxon>Viridiplantae</taxon>
        <taxon>Streptophyta</taxon>
        <taxon>Embryophyta</taxon>
        <taxon>Tracheophyta</taxon>
        <taxon>Spermatophyta</taxon>
        <taxon>Magnoliopsida</taxon>
        <taxon>eudicotyledons</taxon>
        <taxon>Gunneridae</taxon>
        <taxon>Pentapetalae</taxon>
        <taxon>asterids</taxon>
        <taxon>campanulids</taxon>
        <taxon>Apiales</taxon>
        <taxon>Araliaceae</taxon>
        <taxon>Panax</taxon>
    </lineage>
</organism>
<accession>Q08IT1</accession>
<accession>A0A0B4U5C5</accession>
<accession>D2K761</accession>
<accession>G3M1G1</accession>
<accession>Q75W18</accession>
<keyword id="KW-0256">Endoplasmic reticulum</keyword>
<keyword id="KW-0413">Isomerase</keyword>
<keyword id="KW-0414">Isoprene biosynthesis</keyword>
<keyword id="KW-0456">Lyase</keyword>
<keyword id="KW-0472">Membrane</keyword>
<keyword id="KW-0677">Repeat</keyword>
<keyword id="KW-0812">Transmembrane</keyword>
<keyword id="KW-1133">Transmembrane helix</keyword>
<comment type="function">
    <text evidence="3 6 8 9 15">Component of the dammarane-type triterpene saponins (e.g. ginsenosides or panaxosides) biosynthetic pathway (PubMed:17088293, PubMed:23484102, PubMed:25981048, PubMed:27746309, PubMed:29378087). Oxydosqualene cyclase that produces specifically the 20S isomer of the triterpene dammarenediol II (PubMed:17088293, PubMed:23484102, PubMed:25981048).</text>
</comment>
<comment type="catalytic activity">
    <reaction evidence="3 6">
        <text>dammarenediol-II = (S)-2,3-epoxysqualene + H2O</text>
        <dbReference type="Rhea" id="RHEA:30855"/>
        <dbReference type="ChEBI" id="CHEBI:15377"/>
        <dbReference type="ChEBI" id="CHEBI:15441"/>
        <dbReference type="ChEBI" id="CHEBI:62416"/>
        <dbReference type="EC" id="4.2.1.125"/>
    </reaction>
    <physiologicalReaction direction="right-to-left" evidence="6">
        <dbReference type="Rhea" id="RHEA:30857"/>
    </physiologicalReaction>
</comment>
<comment type="pathway">
    <text evidence="19">Secondary metabolite biosynthesis; terpenoid biosynthesis.</text>
</comment>
<comment type="subunit">
    <text evidence="1">Monomer.</text>
</comment>
<comment type="subcellular location">
    <subcellularLocation>
        <location evidence="1">Endoplasmic reticulum membrane</location>
        <topology evidence="2">Single-pass membrane protein</topology>
    </subcellularLocation>
</comment>
<comment type="tissue specificity">
    <text evidence="3 10">Expressed in flower buds, leaves, stems, petioles and roots.</text>
</comment>
<comment type="developmental stage">
    <text evidence="10">Rapid decrease in leaves from the leaf opened to the green fruit stage (PubMed:30577538). Slight increase in roots from the leaf opened to the green fruit stage (PubMed:30577538).</text>
</comment>
<comment type="induction">
    <text evidence="3 4 5 7 9 10 11">Up-regulated by methyl jasmonate (PubMed:17088293). Induced by N,N'-dicyclohexylcarbodiimide (DCCD) in a nitric oxide (NO) dependent manner thus leading to increased ginsenosides accumulation (PubMed:23467002). Induced by A.niger mycelium-derived elicitor, thus improving ginsenosides production in adventitious roots culture (PubMed:27746309). Triggered by vanadate (Ref.10). Induced by Tween 80 (PubMed:24889095). Accumulates under heavy metal stress in the presence of CuCl(2) and CdCl(2) (PubMed:23232757). Influenced in roots and leaves by relative humidity and photosynthetically active radiation (PAR), and in leaves by rain (PubMed:30577538).</text>
</comment>
<comment type="biotechnology">
    <text evidence="8">Transgenic tobacco plants coexpressing PgDDS and PgPPDS1/CYP716A47 accumulate dammarene sapogenin (protopanaxadiol, PPD).</text>
</comment>
<comment type="similarity">
    <text evidence="19">Belongs to the terpene cyclase/mutase family.</text>
</comment>